<comment type="function">
    <text evidence="1 4">Snake venom phospholipase A2 homolog that lacks enzymatic and anticoagulant activities (PubMed:15225567). In mice, it induces conspicuous local myonecrosis, edema, and a systemic interleukin-6 response (PubMed:15225567). In vitro, it is cytolytic upon myoblasts, and weakly bactericidal (PubMed:15225567). A model of myotoxic mechanism has been proposed: an apo Lys49-PLA2 is activated by the entrance of a hydrophobic molecule (e.g. fatty acid) at the hydrophobic channel of the protein leading to a reorientation of a monomer (By similarity). This reorientation causes a transition between 'inactive' to 'active' states, causing alignment of C-terminal and membrane-docking sites (MDoS) side-by-side and putting the membrane-disruption sites (MDiS) in the same plane, exposed to solvent and in a symmetric position for both monomers (By similarity). The MDoS region stabilizes the toxin on membrane by the interaction of charged residues with phospholipid head groups (By similarity). Subsequently, the MDiS region destabilizes the membrane with penetration of hydrophobic residues (By similarity). This insertion causes a disorganization of the membrane, allowing an uncontrolled influx of ions (i.e. calcium and sodium), and eventually triggering irreversible intracellular alterations and cell death (By similarity).</text>
</comment>
<comment type="subunit">
    <text evidence="1 4">Homodimer; non-covalently linked (probable alternative/compact dimer conformation in solution).</text>
</comment>
<comment type="subcellular location">
    <subcellularLocation>
        <location evidence="4">Secreted</location>
    </subcellularLocation>
</comment>
<comment type="tissue specificity">
    <text evidence="6">Expressed by the venom gland.</text>
</comment>
<comment type="toxic dose">
    <text evidence="4">LD(50) is 0.4 mg/kg by intracerebroventricular injection into mice.</text>
</comment>
<comment type="similarity">
    <text evidence="5">Belongs to the phospholipase A2 family. Group II subfamily. K49 sub-subfamily.</text>
</comment>
<comment type="caution">
    <text evidence="5">Does not bind calcium as one of the calcium-binding sites is lost (Asp-&gt;Lys in position 64, which corresponds to 'Lys-49' in the current nomenclature).</text>
</comment>
<name>PA2H1_BOTAT</name>
<protein>
    <recommendedName>
        <fullName>Phospholipase A2 homolog 1</fullName>
        <shortName>svPLA2 homolog</shortName>
    </recommendedName>
    <alternativeName>
        <fullName>Myotoxin I</fullName>
    </alternativeName>
</protein>
<evidence type="ECO:0000250" key="1">
    <source>
        <dbReference type="UniProtKB" id="I6L8L6"/>
    </source>
</evidence>
<evidence type="ECO:0000250" key="2">
    <source>
        <dbReference type="UniProtKB" id="P24605"/>
    </source>
</evidence>
<evidence type="ECO:0000250" key="3">
    <source>
        <dbReference type="UniProtKB" id="Q90249"/>
    </source>
</evidence>
<evidence type="ECO:0000269" key="4">
    <source>
    </source>
</evidence>
<evidence type="ECO:0000305" key="5"/>
<evidence type="ECO:0000305" key="6">
    <source>
    </source>
</evidence>
<proteinExistence type="evidence at protein level"/>
<organism>
    <name type="scientific">Bothrops atrox</name>
    <name type="common">Barba amarilla</name>
    <name type="synonym">Fer-de-lance</name>
    <dbReference type="NCBI Taxonomy" id="8725"/>
    <lineage>
        <taxon>Eukaryota</taxon>
        <taxon>Metazoa</taxon>
        <taxon>Chordata</taxon>
        <taxon>Craniata</taxon>
        <taxon>Vertebrata</taxon>
        <taxon>Euteleostomi</taxon>
        <taxon>Lepidosauria</taxon>
        <taxon>Squamata</taxon>
        <taxon>Bifurcata</taxon>
        <taxon>Unidentata</taxon>
        <taxon>Episquamata</taxon>
        <taxon>Toxicofera</taxon>
        <taxon>Serpentes</taxon>
        <taxon>Colubroidea</taxon>
        <taxon>Viperidae</taxon>
        <taxon>Crotalinae</taxon>
        <taxon>Bothrops</taxon>
    </lineage>
</organism>
<sequence>MRTLWIMAVLLVGVEGSLVELGKMILQETGKNPLTSYGAYGCNCGVGGRGKPKDATDRCCYVHKCCYKKMTDCDPKKDRYSYSWKDKTIVCGEKNSCLKELCECDKAVAICLRENLDTYNKKYKNNYLKPFCKKADAC</sequence>
<keyword id="KW-0044">Antibiotic</keyword>
<keyword id="KW-0929">Antimicrobial</keyword>
<keyword id="KW-0204">Cytolysis</keyword>
<keyword id="KW-0903">Direct protein sequencing</keyword>
<keyword id="KW-1015">Disulfide bond</keyword>
<keyword id="KW-0959">Myotoxin</keyword>
<keyword id="KW-0964">Secreted</keyword>
<keyword id="KW-0732">Signal</keyword>
<keyword id="KW-0800">Toxin</keyword>
<feature type="signal peptide" evidence="4">
    <location>
        <begin position="1"/>
        <end position="16"/>
    </location>
</feature>
<feature type="chain" id="PRO_0000314183" description="Phospholipase A2 homolog 1">
    <location>
        <begin position="17"/>
        <end position="138"/>
    </location>
</feature>
<feature type="region of interest" description="Important for membrane-damaging activities in eukaryotes and bacteria; heparin-binding" evidence="2">
    <location>
        <begin position="121"/>
        <end position="134"/>
    </location>
</feature>
<feature type="site" description="Important residue of the cationic membrane-docking site (MDoS)" evidence="1">
    <location>
        <position position="121"/>
    </location>
</feature>
<feature type="site" description="Important residue of the cationic membrane-docking site (MDoS)" evidence="1">
    <location>
        <position position="124"/>
    </location>
</feature>
<feature type="site" description="Hydrophobic membrane-disruption site (MDiS)" evidence="1">
    <location>
        <position position="128"/>
    </location>
</feature>
<feature type="site" description="Cationic membrane-docking site (MDoS)" evidence="1">
    <location>
        <position position="129"/>
    </location>
</feature>
<feature type="site" description="Hydrophobic membrane-disruption site (MDiS)" evidence="1">
    <location>
        <position position="131"/>
    </location>
</feature>
<feature type="site" description="Cationic membrane-docking site (MDoS)" evidence="1">
    <location>
        <position position="134"/>
    </location>
</feature>
<feature type="disulfide bond" evidence="3">
    <location>
        <begin position="42"/>
        <end position="132"/>
    </location>
</feature>
<feature type="disulfide bond" evidence="3">
    <location>
        <begin position="44"/>
        <end position="60"/>
    </location>
</feature>
<feature type="disulfide bond" evidence="3">
    <location>
        <begin position="59"/>
        <end position="111"/>
    </location>
</feature>
<feature type="disulfide bond" evidence="3">
    <location>
        <begin position="65"/>
        <end position="138"/>
    </location>
</feature>
<feature type="disulfide bond" evidence="3">
    <location>
        <begin position="66"/>
        <end position="104"/>
    </location>
</feature>
<feature type="disulfide bond" evidence="3">
    <location>
        <begin position="73"/>
        <end position="97"/>
    </location>
</feature>
<feature type="disulfide bond" evidence="3">
    <location>
        <begin position="91"/>
        <end position="102"/>
    </location>
</feature>
<accession>Q6JK69</accession>
<dbReference type="EMBL" id="AY431026">
    <property type="protein sequence ID" value="AAR97287.1"/>
    <property type="molecule type" value="mRNA"/>
</dbReference>
<dbReference type="SMR" id="Q6JK69"/>
<dbReference type="Allergome" id="6322">
    <property type="allergen name" value="Bot at 1"/>
</dbReference>
<dbReference type="ABCD" id="Q6JK69">
    <property type="antibodies" value="8 sequenced antibodies"/>
</dbReference>
<dbReference type="GO" id="GO:0005576">
    <property type="term" value="C:extracellular region"/>
    <property type="evidence" value="ECO:0007669"/>
    <property type="project" value="UniProtKB-SubCell"/>
</dbReference>
<dbReference type="GO" id="GO:0005509">
    <property type="term" value="F:calcium ion binding"/>
    <property type="evidence" value="ECO:0007669"/>
    <property type="project" value="InterPro"/>
</dbReference>
<dbReference type="GO" id="GO:0047498">
    <property type="term" value="F:calcium-dependent phospholipase A2 activity"/>
    <property type="evidence" value="ECO:0007669"/>
    <property type="project" value="TreeGrafter"/>
</dbReference>
<dbReference type="GO" id="GO:0005543">
    <property type="term" value="F:phospholipid binding"/>
    <property type="evidence" value="ECO:0007669"/>
    <property type="project" value="TreeGrafter"/>
</dbReference>
<dbReference type="GO" id="GO:0090729">
    <property type="term" value="F:toxin activity"/>
    <property type="evidence" value="ECO:0007669"/>
    <property type="project" value="UniProtKB-KW"/>
</dbReference>
<dbReference type="GO" id="GO:0050482">
    <property type="term" value="P:arachidonate secretion"/>
    <property type="evidence" value="ECO:0007669"/>
    <property type="project" value="InterPro"/>
</dbReference>
<dbReference type="GO" id="GO:0042742">
    <property type="term" value="P:defense response to bacterium"/>
    <property type="evidence" value="ECO:0007669"/>
    <property type="project" value="UniProtKB-KW"/>
</dbReference>
<dbReference type="GO" id="GO:0031640">
    <property type="term" value="P:killing of cells of another organism"/>
    <property type="evidence" value="ECO:0007669"/>
    <property type="project" value="UniProtKB-KW"/>
</dbReference>
<dbReference type="GO" id="GO:0016042">
    <property type="term" value="P:lipid catabolic process"/>
    <property type="evidence" value="ECO:0007669"/>
    <property type="project" value="InterPro"/>
</dbReference>
<dbReference type="GO" id="GO:0042130">
    <property type="term" value="P:negative regulation of T cell proliferation"/>
    <property type="evidence" value="ECO:0007669"/>
    <property type="project" value="TreeGrafter"/>
</dbReference>
<dbReference type="GO" id="GO:0006644">
    <property type="term" value="P:phospholipid metabolic process"/>
    <property type="evidence" value="ECO:0007669"/>
    <property type="project" value="InterPro"/>
</dbReference>
<dbReference type="CDD" id="cd00125">
    <property type="entry name" value="PLA2c"/>
    <property type="match status" value="1"/>
</dbReference>
<dbReference type="FunFam" id="1.20.90.10:FF:000001">
    <property type="entry name" value="Basic phospholipase A2 homolog"/>
    <property type="match status" value="1"/>
</dbReference>
<dbReference type="Gene3D" id="1.20.90.10">
    <property type="entry name" value="Phospholipase A2 domain"/>
    <property type="match status" value="1"/>
</dbReference>
<dbReference type="InterPro" id="IPR001211">
    <property type="entry name" value="PLipase_A2"/>
</dbReference>
<dbReference type="InterPro" id="IPR033112">
    <property type="entry name" value="PLipase_A2_Asp_AS"/>
</dbReference>
<dbReference type="InterPro" id="IPR016090">
    <property type="entry name" value="PLipase_A2_dom"/>
</dbReference>
<dbReference type="InterPro" id="IPR036444">
    <property type="entry name" value="PLipase_A2_dom_sf"/>
</dbReference>
<dbReference type="InterPro" id="IPR033113">
    <property type="entry name" value="PLipase_A2_His_AS"/>
</dbReference>
<dbReference type="PANTHER" id="PTHR11716">
    <property type="entry name" value="PHOSPHOLIPASE A2 FAMILY MEMBER"/>
    <property type="match status" value="1"/>
</dbReference>
<dbReference type="PANTHER" id="PTHR11716:SF9">
    <property type="entry name" value="PHOSPHOLIPASE A2, MEMBRANE ASSOCIATED"/>
    <property type="match status" value="1"/>
</dbReference>
<dbReference type="Pfam" id="PF00068">
    <property type="entry name" value="Phospholip_A2_1"/>
    <property type="match status" value="1"/>
</dbReference>
<dbReference type="PRINTS" id="PR00389">
    <property type="entry name" value="PHPHLIPASEA2"/>
</dbReference>
<dbReference type="SMART" id="SM00085">
    <property type="entry name" value="PA2c"/>
    <property type="match status" value="1"/>
</dbReference>
<dbReference type="SUPFAM" id="SSF48619">
    <property type="entry name" value="Phospholipase A2, PLA2"/>
    <property type="match status" value="1"/>
</dbReference>
<dbReference type="PROSITE" id="PS00119">
    <property type="entry name" value="PA2_ASP"/>
    <property type="match status" value="1"/>
</dbReference>
<dbReference type="PROSITE" id="PS00118">
    <property type="entry name" value="PA2_HIS"/>
    <property type="match status" value="1"/>
</dbReference>
<reference key="1">
    <citation type="journal article" date="2004" name="Toxicon">
        <title>Structural and functional characterization of myotoxin I, a Lys49 phospholipase A2 homologue from the venom of the snake Bothrops atrox.</title>
        <authorList>
            <person name="Nunez V."/>
            <person name="Arce V."/>
            <person name="Gutierrez J.M."/>
            <person name="Lomonte B."/>
        </authorList>
    </citation>
    <scope>NUCLEOTIDE SEQUENCE [MRNA]</scope>
    <scope>PROTEIN SEQUENCE OF 17-56</scope>
    <scope>FUNCTION</scope>
    <scope>SUBUNIT</scope>
    <scope>TOXIC DOSE</scope>
    <scope>SUBCELLULAR LOCATION</scope>
    <source>
        <tissue>Venom</tissue>
        <tissue>Venom gland</tissue>
    </source>
</reference>